<protein>
    <recommendedName>
        <fullName evidence="1">Large ribosomal subunit protein bL9</fullName>
    </recommendedName>
    <alternativeName>
        <fullName evidence="2">50S ribosomal protein L9</fullName>
    </alternativeName>
</protein>
<organism>
    <name type="scientific">Brachyspira hyodysenteriae (strain ATCC 49526 / WA1)</name>
    <dbReference type="NCBI Taxonomy" id="565034"/>
    <lineage>
        <taxon>Bacteria</taxon>
        <taxon>Pseudomonadati</taxon>
        <taxon>Spirochaetota</taxon>
        <taxon>Spirochaetia</taxon>
        <taxon>Brachyspirales</taxon>
        <taxon>Brachyspiraceae</taxon>
        <taxon>Brachyspira</taxon>
    </lineage>
</organism>
<name>RL9_BRAHW</name>
<reference key="1">
    <citation type="journal article" date="2009" name="PLoS ONE">
        <title>Genome sequence of the pathogenic intestinal spirochete Brachyspira hyodysenteriae reveals adaptations to its lifestyle in the porcine large intestine.</title>
        <authorList>
            <person name="Bellgard M.I."/>
            <person name="Wanchanthuek P."/>
            <person name="La T."/>
            <person name="Ryan K."/>
            <person name="Moolhuijzen P."/>
            <person name="Albertyn Z."/>
            <person name="Shaban B."/>
            <person name="Motro Y."/>
            <person name="Dunn D.S."/>
            <person name="Schibeci D."/>
            <person name="Hunter A."/>
            <person name="Barrero R."/>
            <person name="Phillips N.D."/>
            <person name="Hampson D.J."/>
        </authorList>
    </citation>
    <scope>NUCLEOTIDE SEQUENCE [LARGE SCALE GENOMIC DNA]</scope>
    <source>
        <strain>ATCC 49526 / WA1</strain>
    </source>
</reference>
<feature type="chain" id="PRO_1000196227" description="Large ribosomal subunit protein bL9">
    <location>
        <begin position="1"/>
        <end position="166"/>
    </location>
</feature>
<gene>
    <name evidence="1" type="primary">rplI</name>
    <name type="ordered locus">BHWA1_00632</name>
</gene>
<comment type="function">
    <text evidence="1">Binds to the 23S rRNA.</text>
</comment>
<comment type="similarity">
    <text evidence="1">Belongs to the bacterial ribosomal protein bL9 family.</text>
</comment>
<evidence type="ECO:0000255" key="1">
    <source>
        <dbReference type="HAMAP-Rule" id="MF_00503"/>
    </source>
</evidence>
<evidence type="ECO:0000305" key="2"/>
<proteinExistence type="inferred from homology"/>
<accession>C0QZ40</accession>
<dbReference type="EMBL" id="CP001357">
    <property type="protein sequence ID" value="ACN83128.1"/>
    <property type="molecule type" value="Genomic_DNA"/>
</dbReference>
<dbReference type="RefSeq" id="WP_012670179.1">
    <property type="nucleotide sequence ID" value="NC_012225.1"/>
</dbReference>
<dbReference type="SMR" id="C0QZ40"/>
<dbReference type="STRING" id="565034.BHWA1_00632"/>
<dbReference type="GeneID" id="63961751"/>
<dbReference type="KEGG" id="bhy:BHWA1_00632"/>
<dbReference type="eggNOG" id="COG0359">
    <property type="taxonomic scope" value="Bacteria"/>
</dbReference>
<dbReference type="HOGENOM" id="CLU_078938_3_0_12"/>
<dbReference type="Proteomes" id="UP000001803">
    <property type="component" value="Chromosome"/>
</dbReference>
<dbReference type="GO" id="GO:1990904">
    <property type="term" value="C:ribonucleoprotein complex"/>
    <property type="evidence" value="ECO:0007669"/>
    <property type="project" value="UniProtKB-KW"/>
</dbReference>
<dbReference type="GO" id="GO:0005840">
    <property type="term" value="C:ribosome"/>
    <property type="evidence" value="ECO:0007669"/>
    <property type="project" value="UniProtKB-KW"/>
</dbReference>
<dbReference type="GO" id="GO:0019843">
    <property type="term" value="F:rRNA binding"/>
    <property type="evidence" value="ECO:0007669"/>
    <property type="project" value="UniProtKB-UniRule"/>
</dbReference>
<dbReference type="GO" id="GO:0003735">
    <property type="term" value="F:structural constituent of ribosome"/>
    <property type="evidence" value="ECO:0007669"/>
    <property type="project" value="InterPro"/>
</dbReference>
<dbReference type="GO" id="GO:0006412">
    <property type="term" value="P:translation"/>
    <property type="evidence" value="ECO:0007669"/>
    <property type="project" value="UniProtKB-UniRule"/>
</dbReference>
<dbReference type="Gene3D" id="3.10.430.100">
    <property type="entry name" value="Ribosomal protein L9, C-terminal domain"/>
    <property type="match status" value="1"/>
</dbReference>
<dbReference type="Gene3D" id="3.40.5.10">
    <property type="entry name" value="Ribosomal protein L9, N-terminal domain"/>
    <property type="match status" value="1"/>
</dbReference>
<dbReference type="HAMAP" id="MF_00503">
    <property type="entry name" value="Ribosomal_bL9"/>
    <property type="match status" value="1"/>
</dbReference>
<dbReference type="InterPro" id="IPR000244">
    <property type="entry name" value="Ribosomal_bL9"/>
</dbReference>
<dbReference type="InterPro" id="IPR009027">
    <property type="entry name" value="Ribosomal_bL9/RNase_H1_N"/>
</dbReference>
<dbReference type="InterPro" id="IPR020594">
    <property type="entry name" value="Ribosomal_bL9_bac/chp"/>
</dbReference>
<dbReference type="InterPro" id="IPR020069">
    <property type="entry name" value="Ribosomal_bL9_C"/>
</dbReference>
<dbReference type="InterPro" id="IPR036791">
    <property type="entry name" value="Ribosomal_bL9_C_sf"/>
</dbReference>
<dbReference type="InterPro" id="IPR020070">
    <property type="entry name" value="Ribosomal_bL9_N"/>
</dbReference>
<dbReference type="InterPro" id="IPR036935">
    <property type="entry name" value="Ribosomal_bL9_N_sf"/>
</dbReference>
<dbReference type="NCBIfam" id="TIGR00158">
    <property type="entry name" value="L9"/>
    <property type="match status" value="1"/>
</dbReference>
<dbReference type="PANTHER" id="PTHR21368">
    <property type="entry name" value="50S RIBOSOMAL PROTEIN L9"/>
    <property type="match status" value="1"/>
</dbReference>
<dbReference type="Pfam" id="PF03948">
    <property type="entry name" value="Ribosomal_L9_C"/>
    <property type="match status" value="1"/>
</dbReference>
<dbReference type="Pfam" id="PF01281">
    <property type="entry name" value="Ribosomal_L9_N"/>
    <property type="match status" value="1"/>
</dbReference>
<dbReference type="SUPFAM" id="SSF55658">
    <property type="entry name" value="L9 N-domain-like"/>
    <property type="match status" value="1"/>
</dbReference>
<dbReference type="SUPFAM" id="SSF55653">
    <property type="entry name" value="Ribosomal protein L9 C-domain"/>
    <property type="match status" value="1"/>
</dbReference>
<dbReference type="PROSITE" id="PS00651">
    <property type="entry name" value="RIBOSOMAL_L9"/>
    <property type="match status" value="1"/>
</dbReference>
<keyword id="KW-0687">Ribonucleoprotein</keyword>
<keyword id="KW-0689">Ribosomal protein</keyword>
<keyword id="KW-0694">RNA-binding</keyword>
<keyword id="KW-0699">rRNA-binding</keyword>
<sequence>MEVILKRDFISLGYEGDICKVKDGYARNYLIPRNIAVVKNAANLRTLAQMQKSLEKKRAKRKMEAEILKGKIVDITVVIPMKVAENGKLYGSVSQQTIVDALKEKEIDINKRDVHMEKHIKELGDFEVEIKLYHSVNANIKIKVVNVDENAAAEEVKEENTAAVEA</sequence>